<comment type="function">
    <text evidence="3 4">Required for the activation of chitin synthase III (CHS3) activity during the sporulation process.</text>
</comment>
<comment type="subcellular location">
    <subcellularLocation>
        <location evidence="5">Cytoplasm</location>
    </subcellularLocation>
    <subcellularLocation>
        <location evidence="5">Cytoplasmic granule membrane</location>
        <topology evidence="5">Peripheral membrane protein</topology>
    </subcellularLocation>
</comment>
<comment type="induction">
    <text evidence="2 3">During sporulation and at high pH.</text>
</comment>
<comment type="similarity">
    <text evidence="6">Belongs to the SKT5 family.</text>
</comment>
<comment type="sequence caution" evidence="6">
    <conflict type="frameshift">
        <sequence resource="EMBL-CDS" id="BAA20966"/>
    </conflict>
</comment>
<sequence length="512" mass="56578">MSMTICSNTPGAYPEIGAYNEVDKQLESSGFSSDSSLILNKPEVRQYWSSVSSHISRSGDVFTNDKEKISSSIGEDAMDIDASPSLIEKYNSFPTRKILPEQDEFENDVEDDASSSLKEKSQGSCEIEIASEISSEILNGTSADGNSEFHDFAEPPPSQNESVALSFSQSNDLDFLNNPSGSGSSNDINRSTSSISLPRHVSLDFNVYNSLCLTNEVTASESHNVAKFHLGKKNKKSLLPRWKTIEMYGEVVKKTQDIYSNFQYAQYILRVGLDTEKLHELVKELEDESNSFSVDSLKEYLVNDAKVILKKLSAVGYPDAQYLLGDAYSSGVFGKIKNRRAFLLFSAAAKRMHIESVYRTAICYECGLGVTRNAPKAVNFLTFAATKNHPAAMYKLGVYSYHGLMGLPDDILTKMDGYRWLRRATSMASSFVCGAPFELANIYMTGYKDLIISDPDYAMALYEKAAALGHTESARILEDARRSGGFVSRGHPPSAQKYHKTSHEAVAAKKLI</sequence>
<evidence type="ECO:0000256" key="1">
    <source>
        <dbReference type="SAM" id="MobiDB-lite"/>
    </source>
</evidence>
<evidence type="ECO:0000269" key="2">
    <source>
    </source>
</evidence>
<evidence type="ECO:0000269" key="3">
    <source>
    </source>
</evidence>
<evidence type="ECO:0000269" key="4">
    <source>
    </source>
</evidence>
<evidence type="ECO:0000269" key="5">
    <source>
    </source>
</evidence>
<evidence type="ECO:0000305" key="6"/>
<protein>
    <recommendedName>
        <fullName>Protein SHC1</fullName>
    </recommendedName>
    <alternativeName>
        <fullName>Sporulation-specific homolog of CSD4</fullName>
    </alternativeName>
</protein>
<reference key="1">
    <citation type="journal article" date="1997" name="Nature">
        <title>The nucleotide sequence of Saccharomyces cerevisiae chromosome V.</title>
        <authorList>
            <person name="Dietrich F.S."/>
            <person name="Mulligan J.T."/>
            <person name="Hennessy K.M."/>
            <person name="Yelton M.A."/>
            <person name="Allen E."/>
            <person name="Araujo R."/>
            <person name="Aviles E."/>
            <person name="Berno A."/>
            <person name="Brennan T."/>
            <person name="Carpenter J."/>
            <person name="Chen E."/>
            <person name="Cherry J.M."/>
            <person name="Chung E."/>
            <person name="Duncan M."/>
            <person name="Guzman E."/>
            <person name="Hartzell G."/>
            <person name="Hunicke-Smith S."/>
            <person name="Hyman R.W."/>
            <person name="Kayser A."/>
            <person name="Komp C."/>
            <person name="Lashkari D."/>
            <person name="Lew H."/>
            <person name="Lin D."/>
            <person name="Mosedale D."/>
            <person name="Nakahara K."/>
            <person name="Namath A."/>
            <person name="Norgren R."/>
            <person name="Oefner P."/>
            <person name="Oh C."/>
            <person name="Petel F.X."/>
            <person name="Roberts D."/>
            <person name="Sehl P."/>
            <person name="Schramm S."/>
            <person name="Shogren T."/>
            <person name="Smith V."/>
            <person name="Taylor P."/>
            <person name="Wei Y."/>
            <person name="Botstein D."/>
            <person name="Davis R.W."/>
        </authorList>
    </citation>
    <scope>NUCLEOTIDE SEQUENCE [LARGE SCALE GENOMIC DNA]</scope>
    <source>
        <strain>ATCC 204508 / S288c</strain>
    </source>
</reference>
<reference key="2">
    <citation type="journal article" date="2014" name="G3 (Bethesda)">
        <title>The reference genome sequence of Saccharomyces cerevisiae: Then and now.</title>
        <authorList>
            <person name="Engel S.R."/>
            <person name="Dietrich F.S."/>
            <person name="Fisk D.G."/>
            <person name="Binkley G."/>
            <person name="Balakrishnan R."/>
            <person name="Costanzo M.C."/>
            <person name="Dwight S.S."/>
            <person name="Hitz B.C."/>
            <person name="Karra K."/>
            <person name="Nash R.S."/>
            <person name="Weng S."/>
            <person name="Wong E.D."/>
            <person name="Lloyd P."/>
            <person name="Skrzypek M.S."/>
            <person name="Miyasato S.R."/>
            <person name="Simison M."/>
            <person name="Cherry J.M."/>
        </authorList>
    </citation>
    <scope>GENOME REANNOTATION</scope>
    <source>
        <strain>ATCC 204508 / S288c</strain>
    </source>
</reference>
<reference key="3">
    <citation type="journal article" date="1992" name="Cell">
        <title>Rad51 protein involved in repair and recombination in S. cerevisiae is a RecA-like protein.</title>
        <authorList>
            <person name="Shinohara A."/>
            <person name="Ogawa H."/>
            <person name="Ogawa T."/>
        </authorList>
    </citation>
    <scope>NUCLEOTIDE SEQUENCE [GENOMIC DNA] OF 1-454</scope>
</reference>
<reference key="4">
    <citation type="journal article" date="1999" name="Biochem. Biophys. Res. Commun.">
        <title>SHC1, a high pH inducible gene required for growth at alkaline pH in Saccharomyces cerevisiae.</title>
        <authorList>
            <person name="Hong S.K."/>
            <person name="Han S.B."/>
            <person name="Snyder M."/>
            <person name="Choi E.Y."/>
        </authorList>
    </citation>
    <scope>INDUCTION</scope>
</reference>
<reference key="5">
    <citation type="journal article" date="2002" name="Mol. Microbiol.">
        <title>Control of chitin synthesis through Shc1p, a functional homologue of Chs4p specifically induced during sporulation.</title>
        <authorList>
            <person name="Sanz M."/>
            <person name="Trilla J.A."/>
            <person name="Duran A."/>
            <person name="Roncero C."/>
        </authorList>
    </citation>
    <scope>INDUCTION</scope>
    <scope>FUNCTION</scope>
</reference>
<reference key="6">
    <citation type="journal article" date="2005" name="BMC Genet.">
        <title>An interactional network of genes involved in chitin synthesis in Saccharomyces cerevisiae.</title>
        <authorList>
            <person name="Lesage G."/>
            <person name="Shapiro J."/>
            <person name="Specht C.A."/>
            <person name="Sdicu A.-M."/>
            <person name="Menard P."/>
            <person name="Hussein S."/>
            <person name="Tong A.H.Y."/>
            <person name="Boone C."/>
            <person name="Bussey H."/>
        </authorList>
    </citation>
    <scope>FUNCTION</scope>
</reference>
<reference key="7">
    <citation type="journal article" date="2005" name="Eukaryot. Cell">
        <title>Saccharomyces cerevisiae Sps1p regulates trafficking of enzymes required for spore wall synthesis.</title>
        <authorList>
            <person name="Iwamoto M.A."/>
            <person name="Fairclough S.R."/>
            <person name="Rudge S.A."/>
            <person name="Engebrecht J."/>
        </authorList>
    </citation>
    <scope>SUBCELLULAR LOCATION</scope>
</reference>
<keyword id="KW-0961">Cell wall biogenesis/degradation</keyword>
<keyword id="KW-0963">Cytoplasm</keyword>
<keyword id="KW-0472">Membrane</keyword>
<keyword id="KW-1185">Reference proteome</keyword>
<keyword id="KW-0677">Repeat</keyword>
<keyword id="KW-0749">Sporulation</keyword>
<gene>
    <name type="primary">SHC1</name>
    <name type="ordered locus">YER096W</name>
</gene>
<accession>P39000</accession>
<accession>D3DM04</accession>
<name>SHC1_YEAST</name>
<proteinExistence type="evidence at transcript level"/>
<organism>
    <name type="scientific">Saccharomyces cerevisiae (strain ATCC 204508 / S288c)</name>
    <name type="common">Baker's yeast</name>
    <dbReference type="NCBI Taxonomy" id="559292"/>
    <lineage>
        <taxon>Eukaryota</taxon>
        <taxon>Fungi</taxon>
        <taxon>Dikarya</taxon>
        <taxon>Ascomycota</taxon>
        <taxon>Saccharomycotina</taxon>
        <taxon>Saccharomycetes</taxon>
        <taxon>Saccharomycetales</taxon>
        <taxon>Saccharomycetaceae</taxon>
        <taxon>Saccharomyces</taxon>
    </lineage>
</organism>
<dbReference type="EMBL" id="U18839">
    <property type="protein sequence ID" value="AAB64651.1"/>
    <property type="molecule type" value="Genomic_DNA"/>
</dbReference>
<dbReference type="EMBL" id="D10023">
    <property type="protein sequence ID" value="BAA20966.1"/>
    <property type="status" value="ALT_FRAME"/>
    <property type="molecule type" value="Genomic_DNA"/>
</dbReference>
<dbReference type="EMBL" id="BK006939">
    <property type="protein sequence ID" value="DAA07758.1"/>
    <property type="molecule type" value="Genomic_DNA"/>
</dbReference>
<dbReference type="PIR" id="S50599">
    <property type="entry name" value="S50599"/>
</dbReference>
<dbReference type="RefSeq" id="NP_011022.1">
    <property type="nucleotide sequence ID" value="NM_001178987.1"/>
</dbReference>
<dbReference type="SMR" id="P39000"/>
<dbReference type="BioGRID" id="36842">
    <property type="interactions" value="43"/>
</dbReference>
<dbReference type="DIP" id="DIP-5778N"/>
<dbReference type="FunCoup" id="P39000">
    <property type="interactions" value="50"/>
</dbReference>
<dbReference type="STRING" id="4932.YER096W"/>
<dbReference type="PaxDb" id="4932-YER096W"/>
<dbReference type="EnsemblFungi" id="YER096W_mRNA">
    <property type="protein sequence ID" value="YER096W"/>
    <property type="gene ID" value="YER096W"/>
</dbReference>
<dbReference type="GeneID" id="856832"/>
<dbReference type="KEGG" id="sce:YER096W"/>
<dbReference type="AGR" id="SGD:S000000898"/>
<dbReference type="SGD" id="S000000898">
    <property type="gene designation" value="SHC1"/>
</dbReference>
<dbReference type="VEuPathDB" id="FungiDB:YER096W"/>
<dbReference type="eggNOG" id="KOG1550">
    <property type="taxonomic scope" value="Eukaryota"/>
</dbReference>
<dbReference type="GeneTree" id="ENSGT00940000176440"/>
<dbReference type="HOGENOM" id="CLU_532327_0_0_1"/>
<dbReference type="InParanoid" id="P39000"/>
<dbReference type="OMA" id="TAICYEC"/>
<dbReference type="OrthoDB" id="272077at2759"/>
<dbReference type="BioCyc" id="YEAST:G3O-30263-MONOMER"/>
<dbReference type="BioGRID-ORCS" id="856832">
    <property type="hits" value="3 hits in 10 CRISPR screens"/>
</dbReference>
<dbReference type="PRO" id="PR:P39000"/>
<dbReference type="Proteomes" id="UP000002311">
    <property type="component" value="Chromosome V"/>
</dbReference>
<dbReference type="RNAct" id="P39000">
    <property type="molecule type" value="protein"/>
</dbReference>
<dbReference type="GO" id="GO:0005737">
    <property type="term" value="C:cytoplasm"/>
    <property type="evidence" value="ECO:0007669"/>
    <property type="project" value="UniProtKB-SubCell"/>
</dbReference>
<dbReference type="GO" id="GO:0005628">
    <property type="term" value="C:prospore membrane"/>
    <property type="evidence" value="ECO:0000314"/>
    <property type="project" value="SGD"/>
</dbReference>
<dbReference type="GO" id="GO:0008047">
    <property type="term" value="F:enzyme activator activity"/>
    <property type="evidence" value="ECO:0000316"/>
    <property type="project" value="SGD"/>
</dbReference>
<dbReference type="GO" id="GO:0030437">
    <property type="term" value="P:ascospore formation"/>
    <property type="evidence" value="ECO:0000314"/>
    <property type="project" value="SGD"/>
</dbReference>
<dbReference type="GO" id="GO:0006031">
    <property type="term" value="P:chitin biosynthetic process"/>
    <property type="evidence" value="ECO:0000316"/>
    <property type="project" value="SGD"/>
</dbReference>
<dbReference type="GO" id="GO:0031505">
    <property type="term" value="P:fungal-type cell wall organization"/>
    <property type="evidence" value="ECO:0000318"/>
    <property type="project" value="GO_Central"/>
</dbReference>
<dbReference type="Gene3D" id="1.25.40.10">
    <property type="entry name" value="Tetratricopeptide repeat domain"/>
    <property type="match status" value="1"/>
</dbReference>
<dbReference type="InterPro" id="IPR051726">
    <property type="entry name" value="Chitin_Synth_Reg"/>
</dbReference>
<dbReference type="InterPro" id="IPR006597">
    <property type="entry name" value="Sel1-like"/>
</dbReference>
<dbReference type="InterPro" id="IPR011990">
    <property type="entry name" value="TPR-like_helical_dom_sf"/>
</dbReference>
<dbReference type="PANTHER" id="PTHR46430:SF1">
    <property type="entry name" value="CHITIN SYNTHASE REGULATOR SKT5-RELATED"/>
    <property type="match status" value="1"/>
</dbReference>
<dbReference type="PANTHER" id="PTHR46430">
    <property type="entry name" value="PROTEIN SKT5-RELATED"/>
    <property type="match status" value="1"/>
</dbReference>
<dbReference type="Pfam" id="PF08238">
    <property type="entry name" value="Sel1"/>
    <property type="match status" value="4"/>
</dbReference>
<dbReference type="SMART" id="SM00671">
    <property type="entry name" value="SEL1"/>
    <property type="match status" value="4"/>
</dbReference>
<dbReference type="SUPFAM" id="SSF81901">
    <property type="entry name" value="HCP-like"/>
    <property type="match status" value="1"/>
</dbReference>
<feature type="chain" id="PRO_0000202642" description="Protein SHC1">
    <location>
        <begin position="1"/>
        <end position="512"/>
    </location>
</feature>
<feature type="repeat" description="Sel1-like 1">
    <location>
        <begin position="318"/>
        <end position="353"/>
    </location>
</feature>
<feature type="repeat" description="Sel1-like 2">
    <location>
        <begin position="354"/>
        <end position="389"/>
    </location>
</feature>
<feature type="repeat" description="Sel1-like 3">
    <location>
        <begin position="390"/>
        <end position="429"/>
    </location>
</feature>
<feature type="repeat" description="Sel1-like 4">
    <location>
        <begin position="433"/>
        <end position="470"/>
    </location>
</feature>
<feature type="region of interest" description="Disordered" evidence="1">
    <location>
        <begin position="101"/>
        <end position="122"/>
    </location>
</feature>
<feature type="region of interest" description="Disordered" evidence="1">
    <location>
        <begin position="144"/>
        <end position="164"/>
    </location>
</feature>
<feature type="compositionally biased region" description="Acidic residues" evidence="1">
    <location>
        <begin position="101"/>
        <end position="113"/>
    </location>
</feature>
<feature type="sequence conflict" description="In Ref. 3; BAA20966." evidence="6" ref="3">
    <original>V</original>
    <variation>G</variation>
    <location>
        <position position="22"/>
    </location>
</feature>
<feature type="sequence conflict" description="In Ref. 3; BAA20966." evidence="6" ref="3">
    <original>S</original>
    <variation>P</variation>
    <location>
        <position position="33"/>
    </location>
</feature>
<feature type="sequence conflict" description="In Ref. 3; BAA20966." evidence="6" ref="3">
    <original>Y</original>
    <variation>I</variation>
    <location>
        <position position="90"/>
    </location>
</feature>
<feature type="sequence conflict" description="In Ref. 3; BAA20966." evidence="6" ref="3">
    <original>L</original>
    <variation>S</variation>
    <location>
        <position position="176"/>
    </location>
</feature>
<feature type="sequence conflict" description="In Ref. 3; BAA20966." evidence="6" ref="3">
    <original>K</original>
    <variation>E</variation>
    <location>
        <position position="233"/>
    </location>
</feature>
<feature type="sequence conflict" description="In Ref. 3; BAA20966." evidence="6" ref="3">
    <original>K</original>
    <variation>R</variation>
    <location>
        <position position="311"/>
    </location>
</feature>